<organism>
    <name type="scientific">Homo sapiens</name>
    <name type="common">Human</name>
    <dbReference type="NCBI Taxonomy" id="9606"/>
    <lineage>
        <taxon>Eukaryota</taxon>
        <taxon>Metazoa</taxon>
        <taxon>Chordata</taxon>
        <taxon>Craniata</taxon>
        <taxon>Vertebrata</taxon>
        <taxon>Euteleostomi</taxon>
        <taxon>Mammalia</taxon>
        <taxon>Eutheria</taxon>
        <taxon>Euarchontoglires</taxon>
        <taxon>Primates</taxon>
        <taxon>Haplorrhini</taxon>
        <taxon>Catarrhini</taxon>
        <taxon>Hominidae</taxon>
        <taxon>Homo</taxon>
    </lineage>
</organism>
<proteinExistence type="evidence at protein level"/>
<reference key="1">
    <citation type="journal article" date="2001" name="DNA Res.">
        <title>Prediction of the coding sequences of unidentified human genes. XXII. The complete sequences of 50 new cDNA clones which code for large proteins.</title>
        <authorList>
            <person name="Nagase T."/>
            <person name="Kikuno R."/>
            <person name="Ohara O."/>
        </authorList>
    </citation>
    <scope>NUCLEOTIDE SEQUENCE [LARGE SCALE MRNA]</scope>
    <source>
        <tissue>Brain</tissue>
    </source>
</reference>
<reference key="2">
    <citation type="journal article" date="2007" name="BMC Genomics">
        <title>The full-ORF clone resource of the German cDNA consortium.</title>
        <authorList>
            <person name="Bechtel S."/>
            <person name="Rosenfelder H."/>
            <person name="Duda A."/>
            <person name="Schmidt C.P."/>
            <person name="Ernst U."/>
            <person name="Wellenreuther R."/>
            <person name="Mehrle A."/>
            <person name="Schuster C."/>
            <person name="Bahr A."/>
            <person name="Bloecker H."/>
            <person name="Heubner D."/>
            <person name="Hoerlein A."/>
            <person name="Michel G."/>
            <person name="Wedler H."/>
            <person name="Koehrer K."/>
            <person name="Ottenwaelder B."/>
            <person name="Poustka A."/>
            <person name="Wiemann S."/>
            <person name="Schupp I."/>
        </authorList>
    </citation>
    <scope>NUCLEOTIDE SEQUENCE [LARGE SCALE MRNA] OF 17-421</scope>
    <source>
        <tissue>Amygdala</tissue>
    </source>
</reference>
<reference key="3">
    <citation type="journal article" date="2004" name="Gene">
        <title>A novel gene family induced by acute inflammation in endothelial cells.</title>
        <authorList>
            <person name="Warton K."/>
            <person name="Foster N.C."/>
            <person name="Gold W.A."/>
            <person name="Stanley K.K."/>
        </authorList>
    </citation>
    <scope>IDENTIFICATION</scope>
</reference>
<reference key="4">
    <citation type="journal article" date="2011" name="Sci. Signal.">
        <title>System-wide temporal characterization of the proteome and phosphoproteome of human embryonic stem cell differentiation.</title>
        <authorList>
            <person name="Rigbolt K.T."/>
            <person name="Prokhorova T.A."/>
            <person name="Akimov V."/>
            <person name="Henningsen J."/>
            <person name="Johansen P.T."/>
            <person name="Kratchmarova I."/>
            <person name="Kassem M."/>
            <person name="Mann M."/>
            <person name="Olsen J.V."/>
            <person name="Blagoev B."/>
        </authorList>
    </citation>
    <scope>PHOSPHORYLATION [LARGE SCALE ANALYSIS] AT SER-273</scope>
    <scope>IDENTIFICATION BY MASS SPECTROMETRY [LARGE SCALE ANALYSIS]</scope>
</reference>
<keyword id="KW-0597">Phosphoprotein</keyword>
<keyword id="KW-1267">Proteomics identification</keyword>
<keyword id="KW-1185">Reference proteome</keyword>
<feature type="chain" id="PRO_0000293734" description="C2 calcium-dependent domain-containing protein 4C">
    <location>
        <begin position="1"/>
        <end position="421"/>
    </location>
</feature>
<feature type="domain" description="C2" evidence="2">
    <location>
        <begin position="305"/>
        <end position="421"/>
    </location>
</feature>
<feature type="region of interest" description="Disordered" evidence="3">
    <location>
        <begin position="13"/>
        <end position="97"/>
    </location>
</feature>
<feature type="region of interest" description="Disordered" evidence="3">
    <location>
        <begin position="119"/>
        <end position="140"/>
    </location>
</feature>
<feature type="region of interest" description="Disordered" evidence="3">
    <location>
        <begin position="158"/>
        <end position="228"/>
    </location>
</feature>
<feature type="region of interest" description="Disordered" evidence="3">
    <location>
        <begin position="250"/>
        <end position="303"/>
    </location>
</feature>
<feature type="compositionally biased region" description="Polar residues" evidence="3">
    <location>
        <begin position="215"/>
        <end position="228"/>
    </location>
</feature>
<feature type="modified residue" description="Phosphoserine" evidence="1">
    <location>
        <position position="262"/>
    </location>
</feature>
<feature type="modified residue" description="Phosphoserine" evidence="1">
    <location>
        <position position="264"/>
    </location>
</feature>
<feature type="modified residue" description="Phosphoserine" evidence="5">
    <location>
        <position position="273"/>
    </location>
</feature>
<gene>
    <name type="primary">C2CD4C</name>
    <name type="synonym">FAM148C</name>
    <name type="synonym">KIAA1957</name>
    <name type="synonym">NLF3</name>
</gene>
<evidence type="ECO:0000250" key="1">
    <source>
        <dbReference type="UniProtKB" id="Q5HZI2"/>
    </source>
</evidence>
<evidence type="ECO:0000255" key="2">
    <source>
        <dbReference type="PROSITE-ProRule" id="PRU00041"/>
    </source>
</evidence>
<evidence type="ECO:0000256" key="3">
    <source>
        <dbReference type="SAM" id="MobiDB-lite"/>
    </source>
</evidence>
<evidence type="ECO:0000305" key="4"/>
<evidence type="ECO:0007744" key="5">
    <source>
    </source>
</evidence>
<sequence length="421" mass="44576">MRKTNMWFLERLRGSGENGAARGVGSEAGDKASKGPLYSNVLTPDKIPDFFIPPKLPSGPAEGEGQAALGPSTSEQNLASAAPRQTPRSPRLPAKLAAESKSLLKAATRHVIQIESAEDWLSEEATDADPQAQGAMSLPSVPKAQTSYGFAMLAESPHTRRKESLFHSEHGALAQVGSPGAGRRRAAAKANGGDGGPREAGGALMSPGRYFSGGESDTGSSAESSPFGSPLLSRSVSLLKGFAQDSQAKVSQLRHSVGRHGSLSADDSTPDASPGSRRRLTRRAPPEPGPESGQARGEHTVHVGPRGSVRLLAEYEAGQARLRVHLLAAEGLYDRLCDARSINCCVGLCLVPGKLQKQRSTIVKNSRRPVFNEDFFFDGLGPASVRKLALRIKVVNKGSSLKRDTLLGEKELPLTSLLPFL</sequence>
<comment type="similarity">
    <text evidence="4">Belongs to the C2CD4 family.</text>
</comment>
<comment type="sequence caution" evidence="4">
    <conflict type="erroneous initiation">
        <sequence resource="EMBL-CDS" id="BAB85543"/>
    </conflict>
</comment>
<protein>
    <recommendedName>
        <fullName>C2 calcium-dependent domain-containing protein 4C</fullName>
    </recommendedName>
    <alternativeName>
        <fullName>Nuclear-localized factor 3</fullName>
    </alternativeName>
    <alternativeName>
        <fullName>Protein FAM148C</fullName>
    </alternativeName>
</protein>
<dbReference type="EMBL" id="AB075837">
    <property type="protein sequence ID" value="BAB85543.1"/>
    <property type="status" value="ALT_INIT"/>
    <property type="molecule type" value="mRNA"/>
</dbReference>
<dbReference type="EMBL" id="AL834341">
    <property type="protein sequence ID" value="CAD39008.1"/>
    <property type="molecule type" value="mRNA"/>
</dbReference>
<dbReference type="CCDS" id="CCDS45890.1"/>
<dbReference type="RefSeq" id="NP_001129735.1">
    <property type="nucleotide sequence ID" value="NM_001136263.2"/>
</dbReference>
<dbReference type="SMR" id="Q8TF44"/>
<dbReference type="BioGRID" id="126002">
    <property type="interactions" value="17"/>
</dbReference>
<dbReference type="FunCoup" id="Q8TF44">
    <property type="interactions" value="322"/>
</dbReference>
<dbReference type="IntAct" id="Q8TF44">
    <property type="interactions" value="2"/>
</dbReference>
<dbReference type="MINT" id="Q8TF44"/>
<dbReference type="STRING" id="9606.ENSP00000328677"/>
<dbReference type="GlyCosmos" id="Q8TF44">
    <property type="glycosylation" value="1 site, 1 glycan"/>
</dbReference>
<dbReference type="GlyGen" id="Q8TF44">
    <property type="glycosylation" value="1 site, 1 O-linked glycan (1 site)"/>
</dbReference>
<dbReference type="iPTMnet" id="Q8TF44"/>
<dbReference type="PhosphoSitePlus" id="Q8TF44"/>
<dbReference type="SwissPalm" id="Q8TF44"/>
<dbReference type="BioMuta" id="C2CD4C"/>
<dbReference type="DMDM" id="152032539"/>
<dbReference type="jPOST" id="Q8TF44"/>
<dbReference type="MassIVE" id="Q8TF44"/>
<dbReference type="PaxDb" id="9606-ENSP00000328677"/>
<dbReference type="PeptideAtlas" id="Q8TF44"/>
<dbReference type="ProteomicsDB" id="74553"/>
<dbReference type="Antibodypedia" id="59205">
    <property type="antibodies" value="17 antibodies from 5 providers"/>
</dbReference>
<dbReference type="DNASU" id="126567"/>
<dbReference type="Ensembl" id="ENST00000332235.8">
    <property type="protein sequence ID" value="ENSP00000328677.4"/>
    <property type="gene ID" value="ENSG00000183186.8"/>
</dbReference>
<dbReference type="GeneID" id="126567"/>
<dbReference type="KEGG" id="hsa:126567"/>
<dbReference type="MANE-Select" id="ENST00000332235.8">
    <property type="protein sequence ID" value="ENSP00000328677.4"/>
    <property type="RefSeq nucleotide sequence ID" value="NM_001136263.2"/>
    <property type="RefSeq protein sequence ID" value="NP_001129735.1"/>
</dbReference>
<dbReference type="UCSC" id="uc002loo.4">
    <property type="organism name" value="human"/>
</dbReference>
<dbReference type="AGR" id="HGNC:29417"/>
<dbReference type="CTD" id="126567"/>
<dbReference type="DisGeNET" id="126567"/>
<dbReference type="GeneCards" id="C2CD4C"/>
<dbReference type="HGNC" id="HGNC:29417">
    <property type="gene designation" value="C2CD4C"/>
</dbReference>
<dbReference type="HPA" id="ENSG00000183186">
    <property type="expression patterns" value="Tissue enriched (brain)"/>
</dbReference>
<dbReference type="MIM" id="610336">
    <property type="type" value="gene"/>
</dbReference>
<dbReference type="neXtProt" id="NX_Q8TF44"/>
<dbReference type="OpenTargets" id="ENSG00000183186"/>
<dbReference type="PharmGKB" id="PA165393218"/>
<dbReference type="VEuPathDB" id="HostDB:ENSG00000183186"/>
<dbReference type="eggNOG" id="ENOG502QT01">
    <property type="taxonomic scope" value="Eukaryota"/>
</dbReference>
<dbReference type="GeneTree" id="ENSGT00940000161259"/>
<dbReference type="HOGENOM" id="CLU_051964_0_0_1"/>
<dbReference type="InParanoid" id="Q8TF44"/>
<dbReference type="OMA" id="DKHCDAR"/>
<dbReference type="OrthoDB" id="9947256at2759"/>
<dbReference type="PAN-GO" id="Q8TF44">
    <property type="GO annotations" value="0 GO annotations based on evolutionary models"/>
</dbReference>
<dbReference type="PhylomeDB" id="Q8TF44"/>
<dbReference type="TreeFam" id="TF330989"/>
<dbReference type="PathwayCommons" id="Q8TF44"/>
<dbReference type="BioGRID-ORCS" id="126567">
    <property type="hits" value="13 hits in 1147 CRISPR screens"/>
</dbReference>
<dbReference type="CD-CODE" id="FB4E32DD">
    <property type="entry name" value="Presynaptic clusters and postsynaptic densities"/>
</dbReference>
<dbReference type="GenomeRNAi" id="126567"/>
<dbReference type="Pharos" id="Q8TF44">
    <property type="development level" value="Tdark"/>
</dbReference>
<dbReference type="PRO" id="PR:Q8TF44"/>
<dbReference type="Proteomes" id="UP000005640">
    <property type="component" value="Chromosome 19"/>
</dbReference>
<dbReference type="RNAct" id="Q8TF44">
    <property type="molecule type" value="protein"/>
</dbReference>
<dbReference type="Bgee" id="ENSG00000183186">
    <property type="expression patterns" value="Expressed in cingulate cortex and 107 other cell types or tissues"/>
</dbReference>
<dbReference type="GO" id="GO:0005829">
    <property type="term" value="C:cytosol"/>
    <property type="evidence" value="ECO:0007669"/>
    <property type="project" value="Ensembl"/>
</dbReference>
<dbReference type="FunFam" id="2.60.40.150:FF:000172">
    <property type="entry name" value="C2 calcium-dependent domain-containing protein 4C"/>
    <property type="match status" value="1"/>
</dbReference>
<dbReference type="Gene3D" id="2.60.40.150">
    <property type="entry name" value="C2 domain"/>
    <property type="match status" value="1"/>
</dbReference>
<dbReference type="InterPro" id="IPR000008">
    <property type="entry name" value="C2_dom"/>
</dbReference>
<dbReference type="InterPro" id="IPR035892">
    <property type="entry name" value="C2_domain_sf"/>
</dbReference>
<dbReference type="InterPro" id="IPR043549">
    <property type="entry name" value="C2C4C/C2C4D"/>
</dbReference>
<dbReference type="PANTHER" id="PTHR46291:SF5">
    <property type="entry name" value="C2 CALCIUM-DEPENDENT DOMAIN-CONTAINING PROTEIN 4C"/>
    <property type="match status" value="1"/>
</dbReference>
<dbReference type="PANTHER" id="PTHR46291">
    <property type="entry name" value="C2 DOMAIN-CONTAINING PROTEIN"/>
    <property type="match status" value="1"/>
</dbReference>
<dbReference type="Pfam" id="PF00168">
    <property type="entry name" value="C2"/>
    <property type="match status" value="1"/>
</dbReference>
<dbReference type="SMART" id="SM00239">
    <property type="entry name" value="C2"/>
    <property type="match status" value="1"/>
</dbReference>
<dbReference type="SUPFAM" id="SSF49562">
    <property type="entry name" value="C2 domain (Calcium/lipid-binding domain, CaLB)"/>
    <property type="match status" value="1"/>
</dbReference>
<dbReference type="PROSITE" id="PS50004">
    <property type="entry name" value="C2"/>
    <property type="match status" value="1"/>
</dbReference>
<name>C2C4C_HUMAN</name>
<accession>Q8TF44</accession>
<accession>Q8N3H7</accession>